<dbReference type="EMBL" id="AB025639">
    <property type="protein sequence ID" value="BAB01317.1"/>
    <property type="status" value="ALT_SEQ"/>
    <property type="molecule type" value="Genomic_DNA"/>
</dbReference>
<dbReference type="EMBL" id="CP002686">
    <property type="protein sequence ID" value="AEE77015.1"/>
    <property type="molecule type" value="Genomic_DNA"/>
</dbReference>
<dbReference type="EMBL" id="BT024493">
    <property type="protein sequence ID" value="ABD19674.1"/>
    <property type="molecule type" value="mRNA"/>
</dbReference>
<dbReference type="EMBL" id="AK221606">
    <property type="protein sequence ID" value="BAD95171.1"/>
    <property type="molecule type" value="mRNA"/>
</dbReference>
<dbReference type="EMBL" id="AY087970">
    <property type="protein sequence ID" value="AAM65517.1"/>
    <property type="molecule type" value="mRNA"/>
</dbReference>
<dbReference type="RefSeq" id="NP_566766.1">
    <property type="nucleotide sequence ID" value="NM_113444.3"/>
</dbReference>
<dbReference type="SMR" id="Q56XR7"/>
<dbReference type="FunCoup" id="Q56XR7">
    <property type="interactions" value="1821"/>
</dbReference>
<dbReference type="STRING" id="3702.Q56XR7"/>
<dbReference type="iPTMnet" id="Q56XR7"/>
<dbReference type="PaxDb" id="3702-AT3G25480.1"/>
<dbReference type="ProteomicsDB" id="245350"/>
<dbReference type="EnsemblPlants" id="AT3G25480.1">
    <property type="protein sequence ID" value="AT3G25480.1"/>
    <property type="gene ID" value="AT3G25480"/>
</dbReference>
<dbReference type="GeneID" id="822132"/>
<dbReference type="Gramene" id="AT3G25480.1">
    <property type="protein sequence ID" value="AT3G25480.1"/>
    <property type="gene ID" value="AT3G25480"/>
</dbReference>
<dbReference type="KEGG" id="ath:AT3G25480"/>
<dbReference type="Araport" id="AT3G25480"/>
<dbReference type="TAIR" id="AT3G25480"/>
<dbReference type="eggNOG" id="KOG1075">
    <property type="taxonomic scope" value="Eukaryota"/>
</dbReference>
<dbReference type="HOGENOM" id="CLU_023830_0_0_1"/>
<dbReference type="InParanoid" id="Q56XR7"/>
<dbReference type="OMA" id="PSSEMND"/>
<dbReference type="PhylomeDB" id="Q56XR7"/>
<dbReference type="PRO" id="PR:Q56XR7"/>
<dbReference type="Proteomes" id="UP000006548">
    <property type="component" value="Chromosome 3"/>
</dbReference>
<dbReference type="ExpressionAtlas" id="Q56XR7">
    <property type="expression patterns" value="baseline and differential"/>
</dbReference>
<dbReference type="GO" id="GO:0009507">
    <property type="term" value="C:chloroplast"/>
    <property type="evidence" value="ECO:0007005"/>
    <property type="project" value="TAIR"/>
</dbReference>
<dbReference type="GO" id="GO:0009535">
    <property type="term" value="C:chloroplast thylakoid membrane"/>
    <property type="evidence" value="ECO:0007005"/>
    <property type="project" value="TAIR"/>
</dbReference>
<dbReference type="CDD" id="cd00158">
    <property type="entry name" value="RHOD"/>
    <property type="match status" value="1"/>
</dbReference>
<dbReference type="FunFam" id="3.40.250.10:FF:000044">
    <property type="entry name" value="Rhodanese-like domain-containing protein 4, chloroplastic"/>
    <property type="match status" value="1"/>
</dbReference>
<dbReference type="Gene3D" id="3.40.250.10">
    <property type="entry name" value="Rhodanese-like domain"/>
    <property type="match status" value="1"/>
</dbReference>
<dbReference type="InterPro" id="IPR036873">
    <property type="entry name" value="Rhodanese-like_dom_sf"/>
</dbReference>
<dbReference type="InterPro" id="IPR044240">
    <property type="entry name" value="STR4-like"/>
</dbReference>
<dbReference type="PANTHER" id="PTHR47377">
    <property type="entry name" value="RHODANESE-LIKE DOMAIN-CONTAINING PROTEIN 4, CHLOROPLASTIC"/>
    <property type="match status" value="1"/>
</dbReference>
<dbReference type="PANTHER" id="PTHR47377:SF3">
    <property type="entry name" value="RHODANESE-LIKE DOMAIN-CONTAINING PROTEIN 4A, CHLOROPLASTIC"/>
    <property type="match status" value="1"/>
</dbReference>
<dbReference type="SUPFAM" id="SSF52821">
    <property type="entry name" value="Rhodanese/Cell cycle control phosphatase"/>
    <property type="match status" value="1"/>
</dbReference>
<protein>
    <recommendedName>
        <fullName>Rhodanese-like domain-containing protein 4A, chloroplastic</fullName>
    </recommendedName>
    <alternativeName>
        <fullName>Sulfurtransferase 4A</fullName>
        <shortName>AtStr4a</shortName>
    </alternativeName>
</protein>
<comment type="subcellular location">
    <subcellularLocation>
        <location evidence="2">Plastid</location>
        <location evidence="2">Chloroplast</location>
    </subcellularLocation>
    <subcellularLocation>
        <location evidence="2">Membrane</location>
        <topology evidence="2">Single-pass membrane protein</topology>
    </subcellularLocation>
</comment>
<comment type="sequence caution" evidence="2">
    <conflict type="erroneous gene model prediction">
        <sequence resource="EMBL-CDS" id="BAB01317"/>
    </conflict>
</comment>
<gene>
    <name type="primary">STR4A</name>
    <name type="ordered locus">At3g25480</name>
    <name type="ORF">MWL2.9</name>
</gene>
<reference key="1">
    <citation type="journal article" date="2000" name="DNA Res.">
        <title>Structural analysis of Arabidopsis thaliana chromosome 3. I. Sequence features of the regions of 4,504,864 bp covered by sixty P1 and TAC clones.</title>
        <authorList>
            <person name="Sato S."/>
            <person name="Nakamura Y."/>
            <person name="Kaneko T."/>
            <person name="Katoh T."/>
            <person name="Asamizu E."/>
            <person name="Tabata S."/>
        </authorList>
    </citation>
    <scope>NUCLEOTIDE SEQUENCE [LARGE SCALE GENOMIC DNA]</scope>
    <source>
        <strain>cv. Columbia</strain>
    </source>
</reference>
<reference key="2">
    <citation type="journal article" date="2017" name="Plant J.">
        <title>Araport11: a complete reannotation of the Arabidopsis thaliana reference genome.</title>
        <authorList>
            <person name="Cheng C.Y."/>
            <person name="Krishnakumar V."/>
            <person name="Chan A.P."/>
            <person name="Thibaud-Nissen F."/>
            <person name="Schobel S."/>
            <person name="Town C.D."/>
        </authorList>
    </citation>
    <scope>GENOME REANNOTATION</scope>
    <source>
        <strain>cv. Columbia</strain>
    </source>
</reference>
<reference key="3">
    <citation type="submission" date="2005-03" db="EMBL/GenBank/DDBJ databases">
        <title>Large-scale analysis of RIKEN Arabidopsis full-length (RAFL) cDNAs.</title>
        <authorList>
            <person name="Totoki Y."/>
            <person name="Seki M."/>
            <person name="Ishida J."/>
            <person name="Nakajima M."/>
            <person name="Enju A."/>
            <person name="Kamiya A."/>
            <person name="Narusaka M."/>
            <person name="Shin-i T."/>
            <person name="Nakagawa M."/>
            <person name="Sakamoto N."/>
            <person name="Oishi K."/>
            <person name="Kohara Y."/>
            <person name="Kobayashi M."/>
            <person name="Toyoda A."/>
            <person name="Sakaki Y."/>
            <person name="Sakurai T."/>
            <person name="Iida K."/>
            <person name="Akiyama K."/>
            <person name="Satou M."/>
            <person name="Toyoda T."/>
            <person name="Konagaya A."/>
            <person name="Carninci P."/>
            <person name="Kawai J."/>
            <person name="Hayashizaki Y."/>
            <person name="Shinozaki K."/>
        </authorList>
    </citation>
    <scope>NUCLEOTIDE SEQUENCE [LARGE SCALE MRNA]</scope>
    <source>
        <strain>cv. Columbia</strain>
    </source>
</reference>
<reference key="4">
    <citation type="submission" date="2006-02" db="EMBL/GenBank/DDBJ databases">
        <title>Arabidopsis ORF clones.</title>
        <authorList>
            <person name="Shinn P."/>
            <person name="Chen H."/>
            <person name="Kim C.J."/>
            <person name="Ecker J.R."/>
        </authorList>
    </citation>
    <scope>NUCLEOTIDE SEQUENCE [LARGE SCALE MRNA]</scope>
    <source>
        <strain>cv. Columbia</strain>
    </source>
</reference>
<reference key="5">
    <citation type="submission" date="2002-03" db="EMBL/GenBank/DDBJ databases">
        <title>Full-length cDNA from Arabidopsis thaliana.</title>
        <authorList>
            <person name="Brover V.V."/>
            <person name="Troukhan M.E."/>
            <person name="Alexandrov N.A."/>
            <person name="Lu Y.-P."/>
            <person name="Flavell R.B."/>
            <person name="Feldmann K.A."/>
        </authorList>
    </citation>
    <scope>NUCLEOTIDE SEQUENCE [LARGE SCALE MRNA]</scope>
</reference>
<reference key="6">
    <citation type="journal article" date="2007" name="Plant Physiol. Biochem.">
        <title>Differential expression of Arabidopsis sulfurtransferases under various growth conditions.</title>
        <authorList>
            <person name="Bartels A."/>
            <person name="Mock H.P."/>
            <person name="Papenbrock J."/>
        </authorList>
    </citation>
    <scope>GENE FAMILY</scope>
    <scope>NOMENCLATURE</scope>
</reference>
<evidence type="ECO:0000255" key="1"/>
<evidence type="ECO:0000305" key="2"/>
<proteinExistence type="evidence at transcript level"/>
<name>STR4A_ARATH</name>
<feature type="transit peptide" description="Chloroplast" evidence="1">
    <location>
        <begin position="1"/>
        <end position="60"/>
    </location>
</feature>
<feature type="chain" id="PRO_0000416527" description="Rhodanese-like domain-containing protein 4A, chloroplastic">
    <location>
        <begin position="61"/>
        <end position="264"/>
    </location>
</feature>
<feature type="transmembrane region" description="Helical" evidence="1">
    <location>
        <begin position="95"/>
        <end position="115"/>
    </location>
</feature>
<feature type="domain" description="Rhodanese">
    <location>
        <begin position="132"/>
        <end position="232"/>
    </location>
</feature>
<feature type="sequence conflict" description="In Ref. 5; AAM65517." evidence="2" ref="5">
    <original>L</original>
    <variation>S</variation>
    <location>
        <position position="79"/>
    </location>
</feature>
<keyword id="KW-0150">Chloroplast</keyword>
<keyword id="KW-0472">Membrane</keyword>
<keyword id="KW-0934">Plastid</keyword>
<keyword id="KW-1185">Reference proteome</keyword>
<keyword id="KW-0809">Transit peptide</keyword>
<keyword id="KW-0812">Transmembrane</keyword>
<keyword id="KW-1133">Transmembrane helix</keyword>
<accession>Q56XR7</accession>
<accession>Q8LA89</accession>
<accession>Q9LSV4</accession>
<organism>
    <name type="scientific">Arabidopsis thaliana</name>
    <name type="common">Mouse-ear cress</name>
    <dbReference type="NCBI Taxonomy" id="3702"/>
    <lineage>
        <taxon>Eukaryota</taxon>
        <taxon>Viridiplantae</taxon>
        <taxon>Streptophyta</taxon>
        <taxon>Embryophyta</taxon>
        <taxon>Tracheophyta</taxon>
        <taxon>Spermatophyta</taxon>
        <taxon>Magnoliopsida</taxon>
        <taxon>eudicotyledons</taxon>
        <taxon>Gunneridae</taxon>
        <taxon>Pentapetalae</taxon>
        <taxon>rosids</taxon>
        <taxon>malvids</taxon>
        <taxon>Brassicales</taxon>
        <taxon>Brassicaceae</taxon>
        <taxon>Camelineae</taxon>
        <taxon>Arabidopsis</taxon>
    </lineage>
</organism>
<sequence>MTSLPIILASSPLRNLTKPCSTSQIPKPIQNSTKQPPIHLLTKTNLSVTISQLIITSPVLASESFDSISSDPSSGKIDLESILVTIDNFFNKYPFFVAGCTFTYLVVYPAVMFYLRKYKPISAMNAFRKLKNESDSQLLDIRDVKTLALLASPNLKFLGKSSVQVPFSENDEEGFLTKVKGSFSDAENTVVCVLDNFDGNSSKVAELLIKNGFKEAYYIRGGARGKNGWLAIQEELLPPPVHMYTAKNVKSSNNNEASVVGTEN</sequence>